<feature type="chain" id="PRO_1000046749" description="UPF0303 protein PSEEN3311">
    <location>
        <begin position="1"/>
        <end position="180"/>
    </location>
</feature>
<proteinExistence type="inferred from homology"/>
<sequence length="180" mass="19763">MALAEDLALLVRQEEVLQFKHFDEDVAWQLGALLQRRAEAEGWLVVIDIRRFERPLFLAARPGVTPHNHDWIRRKCNTVQRFLCSSYRIGHQLAIDQKDLTQRYNLSPVDYASAGGGFPITVQGAGVIGSVAVSGLPERQDHQAIIDALCTLLGHDRAALSLAPVGKFANAKGKVVAVSG</sequence>
<comment type="similarity">
    <text evidence="1">Belongs to the UPF0303 family.</text>
</comment>
<organism>
    <name type="scientific">Pseudomonas entomophila (strain L48)</name>
    <dbReference type="NCBI Taxonomy" id="384676"/>
    <lineage>
        <taxon>Bacteria</taxon>
        <taxon>Pseudomonadati</taxon>
        <taxon>Pseudomonadota</taxon>
        <taxon>Gammaproteobacteria</taxon>
        <taxon>Pseudomonadales</taxon>
        <taxon>Pseudomonadaceae</taxon>
        <taxon>Pseudomonas</taxon>
    </lineage>
</organism>
<reference key="1">
    <citation type="journal article" date="2006" name="Nat. Biotechnol.">
        <title>Complete genome sequence of the entomopathogenic and metabolically versatile soil bacterium Pseudomonas entomophila.</title>
        <authorList>
            <person name="Vodovar N."/>
            <person name="Vallenet D."/>
            <person name="Cruveiller S."/>
            <person name="Rouy Z."/>
            <person name="Barbe V."/>
            <person name="Acosta C."/>
            <person name="Cattolico L."/>
            <person name="Jubin C."/>
            <person name="Lajus A."/>
            <person name="Segurens B."/>
            <person name="Vacherie B."/>
            <person name="Wincker P."/>
            <person name="Weissenbach J."/>
            <person name="Lemaitre B."/>
            <person name="Medigue C."/>
            <person name="Boccard F."/>
        </authorList>
    </citation>
    <scope>NUCLEOTIDE SEQUENCE [LARGE SCALE GENOMIC DNA]</scope>
    <source>
        <strain>L48</strain>
    </source>
</reference>
<name>Y3311_PSEE4</name>
<gene>
    <name type="ordered locus">PSEEN3311</name>
</gene>
<protein>
    <recommendedName>
        <fullName evidence="1">UPF0303 protein PSEEN3311</fullName>
    </recommendedName>
</protein>
<dbReference type="EMBL" id="CT573326">
    <property type="protein sequence ID" value="CAK16065.1"/>
    <property type="molecule type" value="Genomic_DNA"/>
</dbReference>
<dbReference type="RefSeq" id="WP_011534452.1">
    <property type="nucleotide sequence ID" value="NC_008027.1"/>
</dbReference>
<dbReference type="SMR" id="Q1I8G3"/>
<dbReference type="STRING" id="384676.PSEEN3311"/>
<dbReference type="GeneID" id="32806398"/>
<dbReference type="KEGG" id="pen:PSEEN3311"/>
<dbReference type="eggNOG" id="COG4702">
    <property type="taxonomic scope" value="Bacteria"/>
</dbReference>
<dbReference type="HOGENOM" id="CLU_101036_2_2_6"/>
<dbReference type="OrthoDB" id="9815315at2"/>
<dbReference type="Proteomes" id="UP000000658">
    <property type="component" value="Chromosome"/>
</dbReference>
<dbReference type="Gene3D" id="3.30.450.150">
    <property type="entry name" value="Haem-degrading domain"/>
    <property type="match status" value="1"/>
</dbReference>
<dbReference type="HAMAP" id="MF_00761">
    <property type="entry name" value="UPF0303"/>
    <property type="match status" value="1"/>
</dbReference>
<dbReference type="InterPro" id="IPR005624">
    <property type="entry name" value="PduO/GlcC-like"/>
</dbReference>
<dbReference type="InterPro" id="IPR038084">
    <property type="entry name" value="PduO/GlcC-like_sf"/>
</dbReference>
<dbReference type="InterPro" id="IPR010371">
    <property type="entry name" value="YBR137W-like"/>
</dbReference>
<dbReference type="NCBIfam" id="NF002696">
    <property type="entry name" value="PRK02487.1-5"/>
    <property type="match status" value="1"/>
</dbReference>
<dbReference type="PANTHER" id="PTHR28255">
    <property type="match status" value="1"/>
</dbReference>
<dbReference type="PANTHER" id="PTHR28255:SF1">
    <property type="entry name" value="UPF0303 PROTEIN YBR137W"/>
    <property type="match status" value="1"/>
</dbReference>
<dbReference type="Pfam" id="PF03928">
    <property type="entry name" value="HbpS-like"/>
    <property type="match status" value="1"/>
</dbReference>
<dbReference type="PIRSF" id="PIRSF008757">
    <property type="entry name" value="UCP008757"/>
    <property type="match status" value="1"/>
</dbReference>
<dbReference type="SUPFAM" id="SSF143744">
    <property type="entry name" value="GlcG-like"/>
    <property type="match status" value="1"/>
</dbReference>
<evidence type="ECO:0000255" key="1">
    <source>
        <dbReference type="HAMAP-Rule" id="MF_00761"/>
    </source>
</evidence>
<accession>Q1I8G3</accession>